<proteinExistence type="evidence at transcript level"/>
<accession>P50300</accession>
<name>METK_PINBN</name>
<comment type="function">
    <text evidence="5">Catalyzes the formation of S-adenosylmethionine from methionine and ATP. The reaction comprises two steps that are both catalyzed by the same enzyme: formation of S-adenosylmethionine (AdoMet) and triphosphate, and subsequent hydrolysis of the triphosphate.</text>
</comment>
<comment type="catalytic activity">
    <reaction evidence="5">
        <text>L-methionine + ATP + H2O = S-adenosyl-L-methionine + phosphate + diphosphate</text>
        <dbReference type="Rhea" id="RHEA:21080"/>
        <dbReference type="ChEBI" id="CHEBI:15377"/>
        <dbReference type="ChEBI" id="CHEBI:30616"/>
        <dbReference type="ChEBI" id="CHEBI:33019"/>
        <dbReference type="ChEBI" id="CHEBI:43474"/>
        <dbReference type="ChEBI" id="CHEBI:57844"/>
        <dbReference type="ChEBI" id="CHEBI:59789"/>
        <dbReference type="EC" id="2.5.1.6"/>
    </reaction>
</comment>
<comment type="cofactor">
    <cofactor evidence="5">
        <name>Mn(2+)</name>
        <dbReference type="ChEBI" id="CHEBI:29035"/>
    </cofactor>
    <cofactor evidence="5">
        <name>Mg(2+)</name>
        <dbReference type="ChEBI" id="CHEBI:18420"/>
    </cofactor>
    <cofactor evidence="5">
        <name>Co(2+)</name>
        <dbReference type="ChEBI" id="CHEBI:48828"/>
    </cofactor>
    <text evidence="3 5">Binds 2 divalent ions per subunit. The metal ions interact primarily with the substrate (By similarity). Can utilize magnesium, manganese or cobalt (in vitro) (By similarity).</text>
</comment>
<comment type="cofactor">
    <cofactor evidence="5">
        <name>K(+)</name>
        <dbReference type="ChEBI" id="CHEBI:29103"/>
    </cofactor>
    <text evidence="3">Binds 1 potassium ion per subunit. The potassium ion interacts primarily with the substrate (By similarity).</text>
</comment>
<comment type="pathway">
    <text evidence="5">Amino-acid biosynthesis; S-adenosyl-L-methionine biosynthesis; S-adenosyl-L-methionine from L-methionine: step 1/1.</text>
</comment>
<comment type="subunit">
    <text evidence="1">Homotetramer.</text>
</comment>
<comment type="subcellular location">
    <subcellularLocation>
        <location evidence="1">Cytoplasm</location>
    </subcellularLocation>
</comment>
<comment type="tissue specificity">
    <text>Root.</text>
</comment>
<comment type="similarity">
    <text evidence="6">Belongs to the AdoMet synthase family.</text>
</comment>
<feature type="chain" id="PRO_0000174477" description="S-adenosylmethionine synthase">
    <location>
        <begin position="1"/>
        <end position="393"/>
    </location>
</feature>
<feature type="binding site" evidence="3">
    <location>
        <position position="9"/>
    </location>
    <ligand>
        <name>Mg(2+)</name>
        <dbReference type="ChEBI" id="CHEBI:18420"/>
    </ligand>
</feature>
<feature type="binding site" description="in other chain" evidence="4">
    <location>
        <position position="15"/>
    </location>
    <ligand>
        <name>ATP</name>
        <dbReference type="ChEBI" id="CHEBI:30616"/>
        <note>ligand shared between two neighboring subunits</note>
    </ligand>
</feature>
<feature type="binding site" evidence="2">
    <location>
        <position position="43"/>
    </location>
    <ligand>
        <name>K(+)</name>
        <dbReference type="ChEBI" id="CHEBI:29103"/>
    </ligand>
</feature>
<feature type="binding site" description="in other chain" evidence="2">
    <location>
        <position position="56"/>
    </location>
    <ligand>
        <name>L-methionine</name>
        <dbReference type="ChEBI" id="CHEBI:57844"/>
        <note>ligand shared between two neighboring subunits</note>
    </ligand>
</feature>
<feature type="binding site" description="in other chain" evidence="2">
    <location>
        <position position="99"/>
    </location>
    <ligand>
        <name>L-methionine</name>
        <dbReference type="ChEBI" id="CHEBI:57844"/>
        <note>ligand shared between two neighboring subunits</note>
    </ligand>
</feature>
<feature type="binding site" description="in other chain" evidence="4">
    <location>
        <begin position="167"/>
        <end position="169"/>
    </location>
    <ligand>
        <name>ATP</name>
        <dbReference type="ChEBI" id="CHEBI:30616"/>
        <note>ligand shared between two neighboring subunits</note>
    </ligand>
</feature>
<feature type="binding site" description="in other chain" evidence="4">
    <location>
        <begin position="235"/>
        <end position="238"/>
    </location>
    <ligand>
        <name>ATP</name>
        <dbReference type="ChEBI" id="CHEBI:30616"/>
        <note>ligand shared between two neighboring subunits</note>
    </ligand>
</feature>
<feature type="binding site" description="in other chain" evidence="4">
    <location>
        <position position="246"/>
    </location>
    <ligand>
        <name>ATP</name>
        <dbReference type="ChEBI" id="CHEBI:30616"/>
        <note>ligand shared between two neighboring subunits</note>
    </ligand>
</feature>
<feature type="binding site" evidence="2">
    <location>
        <position position="246"/>
    </location>
    <ligand>
        <name>L-methionine</name>
        <dbReference type="ChEBI" id="CHEBI:57844"/>
        <note>ligand shared between two neighboring subunits</note>
    </ligand>
</feature>
<feature type="binding site" description="in other chain" evidence="2">
    <location>
        <begin position="252"/>
        <end position="253"/>
    </location>
    <ligand>
        <name>ATP</name>
        <dbReference type="ChEBI" id="CHEBI:30616"/>
        <note>ligand shared between two neighboring subunits</note>
    </ligand>
</feature>
<feature type="binding site" evidence="2">
    <location>
        <position position="269"/>
    </location>
    <ligand>
        <name>ATP</name>
        <dbReference type="ChEBI" id="CHEBI:30616"/>
        <note>ligand shared between two neighboring subunits</note>
    </ligand>
</feature>
<feature type="binding site" evidence="2">
    <location>
        <position position="273"/>
    </location>
    <ligand>
        <name>ATP</name>
        <dbReference type="ChEBI" id="CHEBI:30616"/>
        <note>ligand shared between two neighboring subunits</note>
    </ligand>
</feature>
<feature type="binding site" evidence="3">
    <location>
        <position position="277"/>
    </location>
    <ligand>
        <name>ATP</name>
        <dbReference type="ChEBI" id="CHEBI:30616"/>
        <note>ligand shared between two neighboring subunits</note>
    </ligand>
</feature>
<feature type="binding site" description="in other chain" evidence="2">
    <location>
        <position position="277"/>
    </location>
    <ligand>
        <name>L-methionine</name>
        <dbReference type="ChEBI" id="CHEBI:57844"/>
        <note>ligand shared between two neighboring subunits</note>
    </ligand>
</feature>
<gene>
    <name type="primary">METK</name>
</gene>
<organism>
    <name type="scientific">Pinus banksiana</name>
    <name type="common">Jack pine</name>
    <name type="synonym">Pinus divaricata</name>
    <dbReference type="NCBI Taxonomy" id="3353"/>
    <lineage>
        <taxon>Eukaryota</taxon>
        <taxon>Viridiplantae</taxon>
        <taxon>Streptophyta</taxon>
        <taxon>Embryophyta</taxon>
        <taxon>Tracheophyta</taxon>
        <taxon>Spermatophyta</taxon>
        <taxon>Pinopsida</taxon>
        <taxon>Pinidae</taxon>
        <taxon>Conifers I</taxon>
        <taxon>Pinales</taxon>
        <taxon>Pinaceae</taxon>
        <taxon>Pinus</taxon>
        <taxon>Pinus subgen. Pinus</taxon>
    </lineage>
</organism>
<evidence type="ECO:0000250" key="1"/>
<evidence type="ECO:0000250" key="2">
    <source>
        <dbReference type="UniProtKB" id="P0A817"/>
    </source>
</evidence>
<evidence type="ECO:0000250" key="3">
    <source>
        <dbReference type="UniProtKB" id="P13444"/>
    </source>
</evidence>
<evidence type="ECO:0000250" key="4">
    <source>
        <dbReference type="UniProtKB" id="Q00266"/>
    </source>
</evidence>
<evidence type="ECO:0000250" key="5">
    <source>
        <dbReference type="UniProtKB" id="Q96551"/>
    </source>
</evidence>
<evidence type="ECO:0000305" key="6"/>
<sequence length="393" mass="43168">METFLFTSESVNEGHPDKLCDQISDAVLDACLAQDPDSKVACETCTKTNMVMVFGEITTKADVDYEQIVRKTCREIGFISDDVGLDADHCKVLVNIEQQSPDIAQGVHGHFTKRPEEIGAGDQGHMFGYATDETLELMPKCHVLATKLGAKLTEVRKNGTCPWLRPHGKTQVTVEYRNDNGAMVPERVHTVLISTQHDETVPNDEIAPDLKEHVIKPVIPEKYLDENTIFHLNPSGRFVIGGPHGDAGLTGRKIIIDTYGGWGAHGGGAFSGKDPTKVDRSGAYIVRQAAKSIVANGLARRCIVQVSYAIGVPEPLSLFVDTYGTGSIPDKEILEIIKEHFDFRPGMISINLDLKRGGNGRSQKTAAYGHFGRDDPDFTWETVKPLKWEKAQA</sequence>
<keyword id="KW-0067">ATP-binding</keyword>
<keyword id="KW-0170">Cobalt</keyword>
<keyword id="KW-0963">Cytoplasm</keyword>
<keyword id="KW-0460">Magnesium</keyword>
<keyword id="KW-0479">Metal-binding</keyword>
<keyword id="KW-0547">Nucleotide-binding</keyword>
<keyword id="KW-0554">One-carbon metabolism</keyword>
<keyword id="KW-0630">Potassium</keyword>
<keyword id="KW-0808">Transferase</keyword>
<protein>
    <recommendedName>
        <fullName>S-adenosylmethionine synthase</fullName>
        <shortName>AdoMet synthase</shortName>
        <ecNumber evidence="5">2.5.1.6</ecNumber>
    </recommendedName>
    <alternativeName>
        <fullName>Methionine adenosyltransferase</fullName>
        <shortName>MAT</shortName>
    </alternativeName>
</protein>
<dbReference type="EC" id="2.5.1.6" evidence="5"/>
<dbReference type="EMBL" id="U38186">
    <property type="protein sequence ID" value="AAA79831.1"/>
    <property type="molecule type" value="mRNA"/>
</dbReference>
<dbReference type="SMR" id="P50300"/>
<dbReference type="UniPathway" id="UPA00315">
    <property type="reaction ID" value="UER00080"/>
</dbReference>
<dbReference type="GO" id="GO:0005737">
    <property type="term" value="C:cytoplasm"/>
    <property type="evidence" value="ECO:0007669"/>
    <property type="project" value="UniProtKB-SubCell"/>
</dbReference>
<dbReference type="GO" id="GO:0005524">
    <property type="term" value="F:ATP binding"/>
    <property type="evidence" value="ECO:0007669"/>
    <property type="project" value="UniProtKB-KW"/>
</dbReference>
<dbReference type="GO" id="GO:0046872">
    <property type="term" value="F:metal ion binding"/>
    <property type="evidence" value="ECO:0007669"/>
    <property type="project" value="UniProtKB-KW"/>
</dbReference>
<dbReference type="GO" id="GO:0004478">
    <property type="term" value="F:methionine adenosyltransferase activity"/>
    <property type="evidence" value="ECO:0007669"/>
    <property type="project" value="UniProtKB-EC"/>
</dbReference>
<dbReference type="GO" id="GO:0006730">
    <property type="term" value="P:one-carbon metabolic process"/>
    <property type="evidence" value="ECO:0007669"/>
    <property type="project" value="UniProtKB-KW"/>
</dbReference>
<dbReference type="GO" id="GO:0006556">
    <property type="term" value="P:S-adenosylmethionine biosynthetic process"/>
    <property type="evidence" value="ECO:0007669"/>
    <property type="project" value="UniProtKB-UniPathway"/>
</dbReference>
<dbReference type="CDD" id="cd18079">
    <property type="entry name" value="S-AdoMet_synt"/>
    <property type="match status" value="1"/>
</dbReference>
<dbReference type="FunFam" id="3.30.300.10:FF:000001">
    <property type="entry name" value="S-adenosylmethionine synthase"/>
    <property type="match status" value="1"/>
</dbReference>
<dbReference type="FunFam" id="3.30.300.10:FF:000003">
    <property type="entry name" value="S-adenosylmethionine synthase"/>
    <property type="match status" value="1"/>
</dbReference>
<dbReference type="FunFam" id="3.30.300.10:FF:000004">
    <property type="entry name" value="S-adenosylmethionine synthase"/>
    <property type="match status" value="1"/>
</dbReference>
<dbReference type="Gene3D" id="3.30.300.10">
    <property type="match status" value="3"/>
</dbReference>
<dbReference type="HAMAP" id="MF_00086">
    <property type="entry name" value="S_AdoMet_synth1"/>
    <property type="match status" value="1"/>
</dbReference>
<dbReference type="InterPro" id="IPR022631">
    <property type="entry name" value="ADOMET_SYNTHASE_CS"/>
</dbReference>
<dbReference type="InterPro" id="IPR022630">
    <property type="entry name" value="S-AdoMet_synt_C"/>
</dbReference>
<dbReference type="InterPro" id="IPR022629">
    <property type="entry name" value="S-AdoMet_synt_central"/>
</dbReference>
<dbReference type="InterPro" id="IPR022628">
    <property type="entry name" value="S-AdoMet_synt_N"/>
</dbReference>
<dbReference type="InterPro" id="IPR002133">
    <property type="entry name" value="S-AdoMet_synthetase"/>
</dbReference>
<dbReference type="InterPro" id="IPR022636">
    <property type="entry name" value="S-AdoMet_synthetase_sfam"/>
</dbReference>
<dbReference type="NCBIfam" id="TIGR01034">
    <property type="entry name" value="metK"/>
    <property type="match status" value="1"/>
</dbReference>
<dbReference type="PANTHER" id="PTHR11964">
    <property type="entry name" value="S-ADENOSYLMETHIONINE SYNTHETASE"/>
    <property type="match status" value="1"/>
</dbReference>
<dbReference type="Pfam" id="PF02773">
    <property type="entry name" value="S-AdoMet_synt_C"/>
    <property type="match status" value="1"/>
</dbReference>
<dbReference type="Pfam" id="PF02772">
    <property type="entry name" value="S-AdoMet_synt_M"/>
    <property type="match status" value="1"/>
</dbReference>
<dbReference type="Pfam" id="PF00438">
    <property type="entry name" value="S-AdoMet_synt_N"/>
    <property type="match status" value="1"/>
</dbReference>
<dbReference type="PIRSF" id="PIRSF000497">
    <property type="entry name" value="MAT"/>
    <property type="match status" value="1"/>
</dbReference>
<dbReference type="SUPFAM" id="SSF55973">
    <property type="entry name" value="S-adenosylmethionine synthetase"/>
    <property type="match status" value="3"/>
</dbReference>
<dbReference type="PROSITE" id="PS00376">
    <property type="entry name" value="ADOMET_SYNTHASE_1"/>
    <property type="match status" value="1"/>
</dbReference>
<dbReference type="PROSITE" id="PS00377">
    <property type="entry name" value="ADOMET_SYNTHASE_2"/>
    <property type="match status" value="1"/>
</dbReference>
<reference key="1">
    <citation type="submission" date="1995-10" db="EMBL/GenBank/DDBJ databases">
        <title>Differential expression of a root specific S-adenosyl methionine synthetase gene during drought conditioning of jack pine seedlings (Pinus banksiana Lamb.).</title>
        <authorList>
            <person name="Mayne M.B."/>
            <person name="Coleman J.R."/>
            <person name="Blumwald E."/>
        </authorList>
    </citation>
    <scope>NUCLEOTIDE SEQUENCE [MRNA]</scope>
    <source>
        <tissue>Root</tissue>
    </source>
</reference>